<organism>
    <name type="scientific">Paracoccus denitrificans (strain Pd 1222)</name>
    <dbReference type="NCBI Taxonomy" id="318586"/>
    <lineage>
        <taxon>Bacteria</taxon>
        <taxon>Pseudomonadati</taxon>
        <taxon>Pseudomonadota</taxon>
        <taxon>Alphaproteobacteria</taxon>
        <taxon>Rhodobacterales</taxon>
        <taxon>Paracoccaceae</taxon>
        <taxon>Paracoccus</taxon>
    </lineage>
</organism>
<protein>
    <recommendedName>
        <fullName evidence="1">Small ribosomal subunit protein uS8</fullName>
    </recommendedName>
    <alternativeName>
        <fullName evidence="2">30S ribosomal protein S8</fullName>
    </alternativeName>
</protein>
<accession>A1B041</accession>
<sequence length="132" mass="14382">MSMNDPLGDMLTRIRNAQMRGKSTVRTPGSKLRAWVLDVLKAEGYIRGYEEVTTEAGHKELEISLKYYEGTPVIRELARVSKPGRRVYAGAKELPQVRNGLGVSIVSTPKGVMSDAAARSANVGGEVLCTVF</sequence>
<comment type="function">
    <text evidence="1">One of the primary rRNA binding proteins, it binds directly to 16S rRNA central domain where it helps coordinate assembly of the platform of the 30S subunit.</text>
</comment>
<comment type="subunit">
    <text evidence="1">Part of the 30S ribosomal subunit. Contacts proteins S5 and S12.</text>
</comment>
<comment type="similarity">
    <text evidence="1">Belongs to the universal ribosomal protein uS8 family.</text>
</comment>
<reference key="1">
    <citation type="submission" date="2006-12" db="EMBL/GenBank/DDBJ databases">
        <title>Complete sequence of chromosome 1 of Paracoccus denitrificans PD1222.</title>
        <authorList>
            <person name="Copeland A."/>
            <person name="Lucas S."/>
            <person name="Lapidus A."/>
            <person name="Barry K."/>
            <person name="Detter J.C."/>
            <person name="Glavina del Rio T."/>
            <person name="Hammon N."/>
            <person name="Israni S."/>
            <person name="Dalin E."/>
            <person name="Tice H."/>
            <person name="Pitluck S."/>
            <person name="Munk A.C."/>
            <person name="Brettin T."/>
            <person name="Bruce D."/>
            <person name="Han C."/>
            <person name="Tapia R."/>
            <person name="Gilna P."/>
            <person name="Schmutz J."/>
            <person name="Larimer F."/>
            <person name="Land M."/>
            <person name="Hauser L."/>
            <person name="Kyrpides N."/>
            <person name="Lykidis A."/>
            <person name="Spiro S."/>
            <person name="Richardson D.J."/>
            <person name="Moir J.W.B."/>
            <person name="Ferguson S.J."/>
            <person name="van Spanning R.J.M."/>
            <person name="Richardson P."/>
        </authorList>
    </citation>
    <scope>NUCLEOTIDE SEQUENCE [LARGE SCALE GENOMIC DNA]</scope>
    <source>
        <strain>Pd 1222</strain>
    </source>
</reference>
<proteinExistence type="inferred from homology"/>
<evidence type="ECO:0000255" key="1">
    <source>
        <dbReference type="HAMAP-Rule" id="MF_01302"/>
    </source>
</evidence>
<evidence type="ECO:0000305" key="2"/>
<dbReference type="EMBL" id="CP000489">
    <property type="protein sequence ID" value="ABL68885.1"/>
    <property type="molecule type" value="Genomic_DNA"/>
</dbReference>
<dbReference type="RefSeq" id="WP_011747113.1">
    <property type="nucleotide sequence ID" value="NC_008686.1"/>
</dbReference>
<dbReference type="SMR" id="A1B041"/>
<dbReference type="STRING" id="318586.Pden_0773"/>
<dbReference type="EnsemblBacteria" id="ABL68885">
    <property type="protein sequence ID" value="ABL68885"/>
    <property type="gene ID" value="Pden_0773"/>
</dbReference>
<dbReference type="GeneID" id="93451997"/>
<dbReference type="KEGG" id="pde:Pden_0773"/>
<dbReference type="eggNOG" id="COG0096">
    <property type="taxonomic scope" value="Bacteria"/>
</dbReference>
<dbReference type="HOGENOM" id="CLU_098428_0_0_5"/>
<dbReference type="OrthoDB" id="9802617at2"/>
<dbReference type="Proteomes" id="UP000000361">
    <property type="component" value="Chromosome 1"/>
</dbReference>
<dbReference type="GO" id="GO:1990904">
    <property type="term" value="C:ribonucleoprotein complex"/>
    <property type="evidence" value="ECO:0007669"/>
    <property type="project" value="UniProtKB-KW"/>
</dbReference>
<dbReference type="GO" id="GO:0005840">
    <property type="term" value="C:ribosome"/>
    <property type="evidence" value="ECO:0007669"/>
    <property type="project" value="UniProtKB-KW"/>
</dbReference>
<dbReference type="GO" id="GO:0019843">
    <property type="term" value="F:rRNA binding"/>
    <property type="evidence" value="ECO:0007669"/>
    <property type="project" value="UniProtKB-UniRule"/>
</dbReference>
<dbReference type="GO" id="GO:0003735">
    <property type="term" value="F:structural constituent of ribosome"/>
    <property type="evidence" value="ECO:0007669"/>
    <property type="project" value="InterPro"/>
</dbReference>
<dbReference type="GO" id="GO:0006412">
    <property type="term" value="P:translation"/>
    <property type="evidence" value="ECO:0007669"/>
    <property type="project" value="UniProtKB-UniRule"/>
</dbReference>
<dbReference type="FunFam" id="3.30.1370.30:FF:000002">
    <property type="entry name" value="30S ribosomal protein S8"/>
    <property type="match status" value="1"/>
</dbReference>
<dbReference type="FunFam" id="3.30.1490.10:FF:000001">
    <property type="entry name" value="30S ribosomal protein S8"/>
    <property type="match status" value="1"/>
</dbReference>
<dbReference type="Gene3D" id="3.30.1370.30">
    <property type="match status" value="1"/>
</dbReference>
<dbReference type="Gene3D" id="3.30.1490.10">
    <property type="match status" value="1"/>
</dbReference>
<dbReference type="HAMAP" id="MF_01302_B">
    <property type="entry name" value="Ribosomal_uS8_B"/>
    <property type="match status" value="1"/>
</dbReference>
<dbReference type="InterPro" id="IPR000630">
    <property type="entry name" value="Ribosomal_uS8"/>
</dbReference>
<dbReference type="InterPro" id="IPR047863">
    <property type="entry name" value="Ribosomal_uS8_CS"/>
</dbReference>
<dbReference type="InterPro" id="IPR035987">
    <property type="entry name" value="Ribosomal_uS8_sf"/>
</dbReference>
<dbReference type="NCBIfam" id="NF001109">
    <property type="entry name" value="PRK00136.1"/>
    <property type="match status" value="1"/>
</dbReference>
<dbReference type="PANTHER" id="PTHR11758">
    <property type="entry name" value="40S RIBOSOMAL PROTEIN S15A"/>
    <property type="match status" value="1"/>
</dbReference>
<dbReference type="Pfam" id="PF00410">
    <property type="entry name" value="Ribosomal_S8"/>
    <property type="match status" value="1"/>
</dbReference>
<dbReference type="SUPFAM" id="SSF56047">
    <property type="entry name" value="Ribosomal protein S8"/>
    <property type="match status" value="1"/>
</dbReference>
<dbReference type="PROSITE" id="PS00053">
    <property type="entry name" value="RIBOSOMAL_S8"/>
    <property type="match status" value="1"/>
</dbReference>
<keyword id="KW-1185">Reference proteome</keyword>
<keyword id="KW-0687">Ribonucleoprotein</keyword>
<keyword id="KW-0689">Ribosomal protein</keyword>
<keyword id="KW-0694">RNA-binding</keyword>
<keyword id="KW-0699">rRNA-binding</keyword>
<gene>
    <name evidence="1" type="primary">rpsH</name>
    <name type="ordered locus">Pden_0773</name>
</gene>
<name>RS8_PARDP</name>
<feature type="chain" id="PRO_0000290893" description="Small ribosomal subunit protein uS8">
    <location>
        <begin position="1"/>
        <end position="132"/>
    </location>
</feature>